<feature type="chain" id="PRO_0000283260" description="F-box/kelch-repeat protein At4g39590">
    <location>
        <begin position="1"/>
        <end position="402"/>
    </location>
</feature>
<feature type="domain" description="F-box" evidence="1">
    <location>
        <begin position="35"/>
        <end position="81"/>
    </location>
</feature>
<feature type="repeat" description="Kelch 1">
    <location>
        <begin position="143"/>
        <end position="198"/>
    </location>
</feature>
<feature type="repeat" description="Kelch 2">
    <location>
        <begin position="199"/>
        <end position="246"/>
    </location>
</feature>
<feature type="repeat" description="Kelch 3">
    <location>
        <begin position="255"/>
        <end position="300"/>
    </location>
</feature>
<feature type="repeat" description="Kelch 4">
    <location>
        <begin position="302"/>
        <end position="341"/>
    </location>
</feature>
<feature type="region of interest" description="Disordered" evidence="2">
    <location>
        <begin position="1"/>
        <end position="37"/>
    </location>
</feature>
<feature type="compositionally biased region" description="Low complexity" evidence="2">
    <location>
        <begin position="1"/>
        <end position="14"/>
    </location>
</feature>
<feature type="compositionally biased region" description="Polar residues" evidence="2">
    <location>
        <begin position="27"/>
        <end position="37"/>
    </location>
</feature>
<feature type="sequence conflict" description="In Ref. 3; AAM60949." evidence="3" ref="3">
    <original>E</original>
    <variation>Q</variation>
    <location>
        <position position="26"/>
    </location>
</feature>
<feature type="sequence conflict" description="In Ref. 3; AAM60949." evidence="3" ref="3">
    <original>R</original>
    <variation>Q</variation>
    <location>
        <position position="114"/>
    </location>
</feature>
<feature type="sequence conflict" description="In Ref. 3; AAM60949." evidence="3" ref="3">
    <original>Y</original>
    <variation>H</variation>
    <location>
        <position position="129"/>
    </location>
</feature>
<feature type="sequence conflict" description="In Ref. 3; AAM60949." evidence="3" ref="3">
    <original>T</original>
    <variation>I</variation>
    <location>
        <position position="223"/>
    </location>
</feature>
<dbReference type="EMBL" id="AL078620">
    <property type="protein sequence ID" value="CAB44694.1"/>
    <property type="status" value="ALT_INIT"/>
    <property type="molecule type" value="Genomic_DNA"/>
</dbReference>
<dbReference type="EMBL" id="AL161595">
    <property type="protein sequence ID" value="CAB80622.1"/>
    <property type="status" value="ALT_INIT"/>
    <property type="molecule type" value="Genomic_DNA"/>
</dbReference>
<dbReference type="EMBL" id="CP002687">
    <property type="protein sequence ID" value="AEE87091.1"/>
    <property type="molecule type" value="Genomic_DNA"/>
</dbReference>
<dbReference type="EMBL" id="AY084368">
    <property type="protein sequence ID" value="AAM60949.1"/>
    <property type="status" value="ALT_INIT"/>
    <property type="molecule type" value="mRNA"/>
</dbReference>
<dbReference type="EMBL" id="DQ446908">
    <property type="protein sequence ID" value="ABE66121.1"/>
    <property type="molecule type" value="mRNA"/>
</dbReference>
<dbReference type="PIR" id="T09375">
    <property type="entry name" value="T09375"/>
</dbReference>
<dbReference type="RefSeq" id="NP_568062.1">
    <property type="nucleotide sequence ID" value="NM_120119.3"/>
</dbReference>
<dbReference type="SMR" id="Q1PE10"/>
<dbReference type="FunCoup" id="Q1PE10">
    <property type="interactions" value="1"/>
</dbReference>
<dbReference type="PaxDb" id="3702-AT4G39590.1"/>
<dbReference type="ProteomicsDB" id="230102"/>
<dbReference type="EnsemblPlants" id="AT4G39590.1">
    <property type="protein sequence ID" value="AT4G39590.1"/>
    <property type="gene ID" value="AT4G39590"/>
</dbReference>
<dbReference type="GeneID" id="830113"/>
<dbReference type="Gramene" id="AT4G39590.1">
    <property type="protein sequence ID" value="AT4G39590.1"/>
    <property type="gene ID" value="AT4G39590"/>
</dbReference>
<dbReference type="KEGG" id="ath:AT4G39590"/>
<dbReference type="Araport" id="AT4G39590"/>
<dbReference type="TAIR" id="AT4G39590"/>
<dbReference type="eggNOG" id="KOG1072">
    <property type="taxonomic scope" value="Eukaryota"/>
</dbReference>
<dbReference type="HOGENOM" id="CLU_032521_1_2_1"/>
<dbReference type="InParanoid" id="Q1PE10"/>
<dbReference type="OMA" id="NNTHWFT"/>
<dbReference type="OrthoDB" id="45365at2759"/>
<dbReference type="PhylomeDB" id="Q1PE10"/>
<dbReference type="PRO" id="PR:Q1PE10"/>
<dbReference type="Proteomes" id="UP000006548">
    <property type="component" value="Chromosome 4"/>
</dbReference>
<dbReference type="ExpressionAtlas" id="Q1PE10">
    <property type="expression patterns" value="baseline and differential"/>
</dbReference>
<dbReference type="CDD" id="cd22152">
    <property type="entry name" value="F-box_AtAFR-like"/>
    <property type="match status" value="1"/>
</dbReference>
<dbReference type="Gene3D" id="2.120.10.80">
    <property type="entry name" value="Kelch-type beta propeller"/>
    <property type="match status" value="1"/>
</dbReference>
<dbReference type="InterPro" id="IPR036047">
    <property type="entry name" value="F-box-like_dom_sf"/>
</dbReference>
<dbReference type="InterPro" id="IPR050354">
    <property type="entry name" value="F-box/kelch-repeat_ARATH"/>
</dbReference>
<dbReference type="InterPro" id="IPR001810">
    <property type="entry name" value="F-box_dom"/>
</dbReference>
<dbReference type="InterPro" id="IPR015915">
    <property type="entry name" value="Kelch-typ_b-propeller"/>
</dbReference>
<dbReference type="InterPro" id="IPR006652">
    <property type="entry name" value="Kelch_1"/>
</dbReference>
<dbReference type="PANTHER" id="PTHR24414:SF95">
    <property type="entry name" value="F-BOX DOMAIN-CONTAINING PROTEIN"/>
    <property type="match status" value="1"/>
</dbReference>
<dbReference type="PANTHER" id="PTHR24414">
    <property type="entry name" value="F-BOX/KELCH-REPEAT PROTEIN SKIP4"/>
    <property type="match status" value="1"/>
</dbReference>
<dbReference type="Pfam" id="PF00646">
    <property type="entry name" value="F-box"/>
    <property type="match status" value="1"/>
</dbReference>
<dbReference type="Pfam" id="PF25210">
    <property type="entry name" value="Kelch_FKB95"/>
    <property type="match status" value="1"/>
</dbReference>
<dbReference type="SMART" id="SM00256">
    <property type="entry name" value="FBOX"/>
    <property type="match status" value="1"/>
</dbReference>
<dbReference type="SMART" id="SM00612">
    <property type="entry name" value="Kelch"/>
    <property type="match status" value="1"/>
</dbReference>
<dbReference type="SUPFAM" id="SSF81383">
    <property type="entry name" value="F-box domain"/>
    <property type="match status" value="1"/>
</dbReference>
<dbReference type="SUPFAM" id="SSF117281">
    <property type="entry name" value="Kelch motif"/>
    <property type="match status" value="1"/>
</dbReference>
<dbReference type="PROSITE" id="PS50181">
    <property type="entry name" value="FBOX"/>
    <property type="match status" value="1"/>
</dbReference>
<sequence length="402" mass="45744">MFPMSSTSRSSAANNRKDPPRKKNKETPSPVTREPTSIDSLPNDLLLNCFARVSRMYYPALSRVSKRFRSIVTSPEIYNTRSLLNRTEKCLYLCLRFPFDNNTHWFTLYQNPNRTVSDKVFLQIPSPQYPLTLSSNLVAVGSNIYRIGGTVGDDSCPLGFDREPSSKVSILDCRSHTWRDGPRMRLNRRSSTTSVVDGKIYVTGGTEDTDNPSHWIEVFDPKTQSWGTVTNPHIVKVWEEVCYRRAVKSIGHDGKLYLSGDKYVVYDPDEGKWNSVEEHWLIGYAIGSSNCVVDNILFYWDQGVFKWYDSKVSSWKQLKGLEGLPDDFSQREYCKLVDLGGKMAVLWDKWEYSGVCMIFCAEISLEKRDGDEIWGKVEWFDTVLEVGASCSLKSADALSASV</sequence>
<keyword id="KW-0880">Kelch repeat</keyword>
<keyword id="KW-1185">Reference proteome</keyword>
<keyword id="KW-0677">Repeat</keyword>
<gene>
    <name type="ordered locus">At4g39590</name>
    <name type="ORF">F23K16.220</name>
</gene>
<evidence type="ECO:0000255" key="1">
    <source>
        <dbReference type="PROSITE-ProRule" id="PRU00080"/>
    </source>
</evidence>
<evidence type="ECO:0000256" key="2">
    <source>
        <dbReference type="SAM" id="MobiDB-lite"/>
    </source>
</evidence>
<evidence type="ECO:0000305" key="3"/>
<comment type="sequence caution" evidence="3">
    <conflict type="erroneous initiation">
        <sequence resource="EMBL-CDS" id="AAM60949"/>
    </conflict>
</comment>
<comment type="sequence caution" evidence="3">
    <conflict type="erroneous initiation">
        <sequence resource="EMBL-CDS" id="CAB44694"/>
    </conflict>
</comment>
<comment type="sequence caution" evidence="3">
    <conflict type="erroneous initiation">
        <sequence resource="EMBL-CDS" id="CAB80622"/>
    </conflict>
</comment>
<reference key="1">
    <citation type="journal article" date="1999" name="Nature">
        <title>Sequence and analysis of chromosome 4 of the plant Arabidopsis thaliana.</title>
        <authorList>
            <person name="Mayer K.F.X."/>
            <person name="Schueller C."/>
            <person name="Wambutt R."/>
            <person name="Murphy G."/>
            <person name="Volckaert G."/>
            <person name="Pohl T."/>
            <person name="Duesterhoeft A."/>
            <person name="Stiekema W."/>
            <person name="Entian K.-D."/>
            <person name="Terryn N."/>
            <person name="Harris B."/>
            <person name="Ansorge W."/>
            <person name="Brandt P."/>
            <person name="Grivell L.A."/>
            <person name="Rieger M."/>
            <person name="Weichselgartner M."/>
            <person name="de Simone V."/>
            <person name="Obermaier B."/>
            <person name="Mache R."/>
            <person name="Mueller M."/>
            <person name="Kreis M."/>
            <person name="Delseny M."/>
            <person name="Puigdomenech P."/>
            <person name="Watson M."/>
            <person name="Schmidtheini T."/>
            <person name="Reichert B."/>
            <person name="Portetelle D."/>
            <person name="Perez-Alonso M."/>
            <person name="Boutry M."/>
            <person name="Bancroft I."/>
            <person name="Vos P."/>
            <person name="Hoheisel J."/>
            <person name="Zimmermann W."/>
            <person name="Wedler H."/>
            <person name="Ridley P."/>
            <person name="Langham S.-A."/>
            <person name="McCullagh B."/>
            <person name="Bilham L."/>
            <person name="Robben J."/>
            <person name="van der Schueren J."/>
            <person name="Grymonprez B."/>
            <person name="Chuang Y.-J."/>
            <person name="Vandenbussche F."/>
            <person name="Braeken M."/>
            <person name="Weltjens I."/>
            <person name="Voet M."/>
            <person name="Bastiaens I."/>
            <person name="Aert R."/>
            <person name="Defoor E."/>
            <person name="Weitzenegger T."/>
            <person name="Bothe G."/>
            <person name="Ramsperger U."/>
            <person name="Hilbert H."/>
            <person name="Braun M."/>
            <person name="Holzer E."/>
            <person name="Brandt A."/>
            <person name="Peters S."/>
            <person name="van Staveren M."/>
            <person name="Dirkse W."/>
            <person name="Mooijman P."/>
            <person name="Klein Lankhorst R."/>
            <person name="Rose M."/>
            <person name="Hauf J."/>
            <person name="Koetter P."/>
            <person name="Berneiser S."/>
            <person name="Hempel S."/>
            <person name="Feldpausch M."/>
            <person name="Lamberth S."/>
            <person name="Van den Daele H."/>
            <person name="De Keyser A."/>
            <person name="Buysshaert C."/>
            <person name="Gielen J."/>
            <person name="Villarroel R."/>
            <person name="De Clercq R."/>
            <person name="van Montagu M."/>
            <person name="Rogers J."/>
            <person name="Cronin A."/>
            <person name="Quail M.A."/>
            <person name="Bray-Allen S."/>
            <person name="Clark L."/>
            <person name="Doggett J."/>
            <person name="Hall S."/>
            <person name="Kay M."/>
            <person name="Lennard N."/>
            <person name="McLay K."/>
            <person name="Mayes R."/>
            <person name="Pettett A."/>
            <person name="Rajandream M.A."/>
            <person name="Lyne M."/>
            <person name="Benes V."/>
            <person name="Rechmann S."/>
            <person name="Borkova D."/>
            <person name="Bloecker H."/>
            <person name="Scharfe M."/>
            <person name="Grimm M."/>
            <person name="Loehnert T.-H."/>
            <person name="Dose S."/>
            <person name="de Haan M."/>
            <person name="Maarse A.C."/>
            <person name="Schaefer M."/>
            <person name="Mueller-Auer S."/>
            <person name="Gabel C."/>
            <person name="Fuchs M."/>
            <person name="Fartmann B."/>
            <person name="Granderath K."/>
            <person name="Dauner D."/>
            <person name="Herzl A."/>
            <person name="Neumann S."/>
            <person name="Argiriou A."/>
            <person name="Vitale D."/>
            <person name="Liguori R."/>
            <person name="Piravandi E."/>
            <person name="Massenet O."/>
            <person name="Quigley F."/>
            <person name="Clabauld G."/>
            <person name="Muendlein A."/>
            <person name="Felber R."/>
            <person name="Schnabl S."/>
            <person name="Hiller R."/>
            <person name="Schmidt W."/>
            <person name="Lecharny A."/>
            <person name="Aubourg S."/>
            <person name="Chefdor F."/>
            <person name="Cooke R."/>
            <person name="Berger C."/>
            <person name="Monfort A."/>
            <person name="Casacuberta E."/>
            <person name="Gibbons T."/>
            <person name="Weber N."/>
            <person name="Vandenbol M."/>
            <person name="Bargues M."/>
            <person name="Terol J."/>
            <person name="Torres A."/>
            <person name="Perez-Perez A."/>
            <person name="Purnelle B."/>
            <person name="Bent E."/>
            <person name="Johnson S."/>
            <person name="Tacon D."/>
            <person name="Jesse T."/>
            <person name="Heijnen L."/>
            <person name="Schwarz S."/>
            <person name="Scholler P."/>
            <person name="Heber S."/>
            <person name="Francs P."/>
            <person name="Bielke C."/>
            <person name="Frishman D."/>
            <person name="Haase D."/>
            <person name="Lemcke K."/>
            <person name="Mewes H.-W."/>
            <person name="Stocker S."/>
            <person name="Zaccaria P."/>
            <person name="Bevan M."/>
            <person name="Wilson R.K."/>
            <person name="de la Bastide M."/>
            <person name="Habermann K."/>
            <person name="Parnell L."/>
            <person name="Dedhia N."/>
            <person name="Gnoj L."/>
            <person name="Schutz K."/>
            <person name="Huang E."/>
            <person name="Spiegel L."/>
            <person name="Sekhon M."/>
            <person name="Murray J."/>
            <person name="Sheet P."/>
            <person name="Cordes M."/>
            <person name="Abu-Threideh J."/>
            <person name="Stoneking T."/>
            <person name="Kalicki J."/>
            <person name="Graves T."/>
            <person name="Harmon G."/>
            <person name="Edwards J."/>
            <person name="Latreille P."/>
            <person name="Courtney L."/>
            <person name="Cloud J."/>
            <person name="Abbott A."/>
            <person name="Scott K."/>
            <person name="Johnson D."/>
            <person name="Minx P."/>
            <person name="Bentley D."/>
            <person name="Fulton B."/>
            <person name="Miller N."/>
            <person name="Greco T."/>
            <person name="Kemp K."/>
            <person name="Kramer J."/>
            <person name="Fulton L."/>
            <person name="Mardis E."/>
            <person name="Dante M."/>
            <person name="Pepin K."/>
            <person name="Hillier L.W."/>
            <person name="Nelson J."/>
            <person name="Spieth J."/>
            <person name="Ryan E."/>
            <person name="Andrews S."/>
            <person name="Geisel C."/>
            <person name="Layman D."/>
            <person name="Du H."/>
            <person name="Ali J."/>
            <person name="Berghoff A."/>
            <person name="Jones K."/>
            <person name="Drone K."/>
            <person name="Cotton M."/>
            <person name="Joshu C."/>
            <person name="Antonoiu B."/>
            <person name="Zidanic M."/>
            <person name="Strong C."/>
            <person name="Sun H."/>
            <person name="Lamar B."/>
            <person name="Yordan C."/>
            <person name="Ma P."/>
            <person name="Zhong J."/>
            <person name="Preston R."/>
            <person name="Vil D."/>
            <person name="Shekher M."/>
            <person name="Matero A."/>
            <person name="Shah R."/>
            <person name="Swaby I.K."/>
            <person name="O'Shaughnessy A."/>
            <person name="Rodriguez M."/>
            <person name="Hoffman J."/>
            <person name="Till S."/>
            <person name="Granat S."/>
            <person name="Shohdy N."/>
            <person name="Hasegawa A."/>
            <person name="Hameed A."/>
            <person name="Lodhi M."/>
            <person name="Johnson A."/>
            <person name="Chen E."/>
            <person name="Marra M.A."/>
            <person name="Martienssen R."/>
            <person name="McCombie W.R."/>
        </authorList>
    </citation>
    <scope>NUCLEOTIDE SEQUENCE [LARGE SCALE GENOMIC DNA]</scope>
    <source>
        <strain>cv. Columbia</strain>
    </source>
</reference>
<reference key="2">
    <citation type="journal article" date="2017" name="Plant J.">
        <title>Araport11: a complete reannotation of the Arabidopsis thaliana reference genome.</title>
        <authorList>
            <person name="Cheng C.Y."/>
            <person name="Krishnakumar V."/>
            <person name="Chan A.P."/>
            <person name="Thibaud-Nissen F."/>
            <person name="Schobel S."/>
            <person name="Town C.D."/>
        </authorList>
    </citation>
    <scope>GENOME REANNOTATION</scope>
    <source>
        <strain>cv. Columbia</strain>
    </source>
</reference>
<reference key="3">
    <citation type="submission" date="2002-03" db="EMBL/GenBank/DDBJ databases">
        <title>Full-length cDNA from Arabidopsis thaliana.</title>
        <authorList>
            <person name="Brover V.V."/>
            <person name="Troukhan M.E."/>
            <person name="Alexandrov N.A."/>
            <person name="Lu Y.-P."/>
            <person name="Flavell R.B."/>
            <person name="Feldmann K.A."/>
        </authorList>
    </citation>
    <scope>NUCLEOTIDE SEQUENCE [LARGE SCALE MRNA]</scope>
</reference>
<reference key="4">
    <citation type="journal article" date="2006" name="Plant Biotechnol. J.">
        <title>Simultaneous high-throughput recombinational cloning of open reading frames in closed and open configurations.</title>
        <authorList>
            <person name="Underwood B.A."/>
            <person name="Vanderhaeghen R."/>
            <person name="Whitford R."/>
            <person name="Town C.D."/>
            <person name="Hilson P."/>
        </authorList>
    </citation>
    <scope>NUCLEOTIDE SEQUENCE [LARGE SCALE MRNA]</scope>
    <source>
        <strain>cv. Columbia</strain>
    </source>
</reference>
<accession>Q1PE10</accession>
<accession>Q8LGB0</accession>
<accession>Q9SV99</accession>
<name>FK102_ARATH</name>
<protein>
    <recommendedName>
        <fullName>F-box/kelch-repeat protein At4g39590</fullName>
    </recommendedName>
</protein>
<proteinExistence type="evidence at transcript level"/>
<organism>
    <name type="scientific">Arabidopsis thaliana</name>
    <name type="common">Mouse-ear cress</name>
    <dbReference type="NCBI Taxonomy" id="3702"/>
    <lineage>
        <taxon>Eukaryota</taxon>
        <taxon>Viridiplantae</taxon>
        <taxon>Streptophyta</taxon>
        <taxon>Embryophyta</taxon>
        <taxon>Tracheophyta</taxon>
        <taxon>Spermatophyta</taxon>
        <taxon>Magnoliopsida</taxon>
        <taxon>eudicotyledons</taxon>
        <taxon>Gunneridae</taxon>
        <taxon>Pentapetalae</taxon>
        <taxon>rosids</taxon>
        <taxon>malvids</taxon>
        <taxon>Brassicales</taxon>
        <taxon>Brassicaceae</taxon>
        <taxon>Camelineae</taxon>
        <taxon>Arabidopsis</taxon>
    </lineage>
</organism>